<protein>
    <recommendedName>
        <fullName evidence="1">Trigger factor</fullName>
        <shortName evidence="1">TF</shortName>
        <ecNumber evidence="1">5.2.1.8</ecNumber>
    </recommendedName>
    <alternativeName>
        <fullName evidence="1">PPIase</fullName>
    </alternativeName>
</protein>
<keyword id="KW-0131">Cell cycle</keyword>
<keyword id="KW-0132">Cell division</keyword>
<keyword id="KW-0143">Chaperone</keyword>
<keyword id="KW-0963">Cytoplasm</keyword>
<keyword id="KW-0413">Isomerase</keyword>
<keyword id="KW-0697">Rotamase</keyword>
<proteinExistence type="inferred from homology"/>
<dbReference type="EC" id="5.2.1.8" evidence="1"/>
<dbReference type="EMBL" id="CP000805">
    <property type="protein sequence ID" value="ACD70929.1"/>
    <property type="molecule type" value="Genomic_DNA"/>
</dbReference>
<dbReference type="RefSeq" id="WP_010881955.1">
    <property type="nucleotide sequence ID" value="NC_021508.1"/>
</dbReference>
<dbReference type="SMR" id="B2S3A0"/>
<dbReference type="GeneID" id="93876275"/>
<dbReference type="KEGG" id="tpp:TPASS_0506"/>
<dbReference type="PATRIC" id="fig|455434.6.peg.503"/>
<dbReference type="Proteomes" id="UP000001202">
    <property type="component" value="Chromosome"/>
</dbReference>
<dbReference type="GO" id="GO:0005737">
    <property type="term" value="C:cytoplasm"/>
    <property type="evidence" value="ECO:0007669"/>
    <property type="project" value="UniProtKB-SubCell"/>
</dbReference>
<dbReference type="GO" id="GO:0003755">
    <property type="term" value="F:peptidyl-prolyl cis-trans isomerase activity"/>
    <property type="evidence" value="ECO:0007669"/>
    <property type="project" value="UniProtKB-UniRule"/>
</dbReference>
<dbReference type="GO" id="GO:0044183">
    <property type="term" value="F:protein folding chaperone"/>
    <property type="evidence" value="ECO:0007669"/>
    <property type="project" value="TreeGrafter"/>
</dbReference>
<dbReference type="GO" id="GO:0043022">
    <property type="term" value="F:ribosome binding"/>
    <property type="evidence" value="ECO:0007669"/>
    <property type="project" value="TreeGrafter"/>
</dbReference>
<dbReference type="GO" id="GO:0051083">
    <property type="term" value="P:'de novo' cotranslational protein folding"/>
    <property type="evidence" value="ECO:0007669"/>
    <property type="project" value="TreeGrafter"/>
</dbReference>
<dbReference type="GO" id="GO:0051301">
    <property type="term" value="P:cell division"/>
    <property type="evidence" value="ECO:0007669"/>
    <property type="project" value="UniProtKB-KW"/>
</dbReference>
<dbReference type="GO" id="GO:0061077">
    <property type="term" value="P:chaperone-mediated protein folding"/>
    <property type="evidence" value="ECO:0007669"/>
    <property type="project" value="TreeGrafter"/>
</dbReference>
<dbReference type="GO" id="GO:0015031">
    <property type="term" value="P:protein transport"/>
    <property type="evidence" value="ECO:0007669"/>
    <property type="project" value="UniProtKB-UniRule"/>
</dbReference>
<dbReference type="GO" id="GO:0043335">
    <property type="term" value="P:protein unfolding"/>
    <property type="evidence" value="ECO:0007669"/>
    <property type="project" value="TreeGrafter"/>
</dbReference>
<dbReference type="Gene3D" id="3.10.50.40">
    <property type="match status" value="1"/>
</dbReference>
<dbReference type="Gene3D" id="3.30.70.1050">
    <property type="entry name" value="Trigger factor ribosome-binding domain"/>
    <property type="match status" value="1"/>
</dbReference>
<dbReference type="Gene3D" id="1.10.3120.10">
    <property type="entry name" value="Trigger factor, C-terminal domain"/>
    <property type="match status" value="1"/>
</dbReference>
<dbReference type="HAMAP" id="MF_00303">
    <property type="entry name" value="Trigger_factor_Tig"/>
    <property type="match status" value="1"/>
</dbReference>
<dbReference type="InterPro" id="IPR046357">
    <property type="entry name" value="PPIase_dom_sf"/>
</dbReference>
<dbReference type="InterPro" id="IPR005215">
    <property type="entry name" value="Trig_fac"/>
</dbReference>
<dbReference type="InterPro" id="IPR008880">
    <property type="entry name" value="Trigger_fac_C"/>
</dbReference>
<dbReference type="InterPro" id="IPR037041">
    <property type="entry name" value="Trigger_fac_C_sf"/>
</dbReference>
<dbReference type="InterPro" id="IPR008881">
    <property type="entry name" value="Trigger_fac_ribosome-bd_bac"/>
</dbReference>
<dbReference type="InterPro" id="IPR036611">
    <property type="entry name" value="Trigger_fac_ribosome-bd_sf"/>
</dbReference>
<dbReference type="InterPro" id="IPR027304">
    <property type="entry name" value="Trigger_fact/SurA_dom_sf"/>
</dbReference>
<dbReference type="NCBIfam" id="TIGR00115">
    <property type="entry name" value="tig"/>
    <property type="match status" value="1"/>
</dbReference>
<dbReference type="PANTHER" id="PTHR30560">
    <property type="entry name" value="TRIGGER FACTOR CHAPERONE AND PEPTIDYL-PROLYL CIS/TRANS ISOMERASE"/>
    <property type="match status" value="1"/>
</dbReference>
<dbReference type="PANTHER" id="PTHR30560:SF3">
    <property type="entry name" value="TRIGGER FACTOR-LIKE PROTEIN TIG, CHLOROPLASTIC"/>
    <property type="match status" value="1"/>
</dbReference>
<dbReference type="Pfam" id="PF05698">
    <property type="entry name" value="Trigger_C"/>
    <property type="match status" value="1"/>
</dbReference>
<dbReference type="Pfam" id="PF05697">
    <property type="entry name" value="Trigger_N"/>
    <property type="match status" value="1"/>
</dbReference>
<dbReference type="PIRSF" id="PIRSF003095">
    <property type="entry name" value="Trigger_factor"/>
    <property type="match status" value="1"/>
</dbReference>
<dbReference type="SUPFAM" id="SSF54534">
    <property type="entry name" value="FKBP-like"/>
    <property type="match status" value="1"/>
</dbReference>
<dbReference type="SUPFAM" id="SSF109998">
    <property type="entry name" value="Triger factor/SurA peptide-binding domain-like"/>
    <property type="match status" value="1"/>
</dbReference>
<dbReference type="SUPFAM" id="SSF102735">
    <property type="entry name" value="Trigger factor ribosome-binding domain"/>
    <property type="match status" value="1"/>
</dbReference>
<sequence>MELQKKFTALAQSQVELEVVVAREDAQRHYQRFVEEYLERARLPGFRKGKVPLAVLERKYGSAIRQDAAAALMEKALEEGFAQASQDSQPLPISRPSLKKKPVFDPDEDFSFAVIYDVFPSVELRNTSGFSLSVPTVSVTEEDVSRELTRIQERNALVTDKGADSCAEVGDIATVDYHEVDDSGAVRPGTERAGVVFTLGVEEGPFALGQDILGMKLGQRCLFAKRAGMLKDEAAQVRVTLKALKQRQLPSLDDELAQDVSDAFRTLDDLTRSVRQNLAEALEAALHEYKRRQLLRILVRENPFSLPESLVVGEMESRWALVMRQFGVSLSGTPQNKLQFFQQWRPEVEEHLKQRVIVELLLKQEQVSVSAEEIETEYVRIASKTGSKEERVREYYAGEEKRRALCEGIRERKLCQKLLGRCVTECGPEQSLTDFLQEQSRA</sequence>
<organism>
    <name type="scientific">Treponema pallidum subsp. pallidum (strain SS14)</name>
    <dbReference type="NCBI Taxonomy" id="455434"/>
    <lineage>
        <taxon>Bacteria</taxon>
        <taxon>Pseudomonadati</taxon>
        <taxon>Spirochaetota</taxon>
        <taxon>Spirochaetia</taxon>
        <taxon>Spirochaetales</taxon>
        <taxon>Treponemataceae</taxon>
        <taxon>Treponema</taxon>
    </lineage>
</organism>
<comment type="function">
    <text evidence="1">Involved in protein export. Acts as a chaperone by maintaining the newly synthesized protein in an open conformation. Functions as a peptidyl-prolyl cis-trans isomerase.</text>
</comment>
<comment type="catalytic activity">
    <reaction evidence="1">
        <text>[protein]-peptidylproline (omega=180) = [protein]-peptidylproline (omega=0)</text>
        <dbReference type="Rhea" id="RHEA:16237"/>
        <dbReference type="Rhea" id="RHEA-COMP:10747"/>
        <dbReference type="Rhea" id="RHEA-COMP:10748"/>
        <dbReference type="ChEBI" id="CHEBI:83833"/>
        <dbReference type="ChEBI" id="CHEBI:83834"/>
        <dbReference type="EC" id="5.2.1.8"/>
    </reaction>
</comment>
<comment type="subcellular location">
    <subcellularLocation>
        <location>Cytoplasm</location>
    </subcellularLocation>
    <text evidence="1">About half TF is bound to the ribosome near the polypeptide exit tunnel while the other half is free in the cytoplasm.</text>
</comment>
<comment type="domain">
    <text evidence="1">Consists of 3 domains; the N-terminus binds the ribosome, the middle domain has PPIase activity, while the C-terminus has intrinsic chaperone activity on its own.</text>
</comment>
<comment type="similarity">
    <text evidence="1">Belongs to the FKBP-type PPIase family. Tig subfamily.</text>
</comment>
<accession>B2S3A0</accession>
<feature type="chain" id="PRO_1000115596" description="Trigger factor">
    <location>
        <begin position="1"/>
        <end position="442"/>
    </location>
</feature>
<feature type="domain" description="PPIase FKBP-type" evidence="1">
    <location>
        <begin position="170"/>
        <end position="250"/>
    </location>
</feature>
<gene>
    <name evidence="1" type="primary">tig</name>
    <name type="ordered locus">TPASS_0506</name>
</gene>
<reference key="1">
    <citation type="journal article" date="2008" name="BMC Microbiol.">
        <title>Complete genome sequence of Treponema pallidum ssp. pallidum strain SS14 determined with oligonucleotide arrays.</title>
        <authorList>
            <person name="Matejkova P."/>
            <person name="Strouhal M."/>
            <person name="Smajs D."/>
            <person name="Norris S.J."/>
            <person name="Palzkill T."/>
            <person name="Petrosino J.F."/>
            <person name="Sodergren E."/>
            <person name="Norton J.E."/>
            <person name="Singh J."/>
            <person name="Richmond T.A."/>
            <person name="Molla M.N."/>
            <person name="Albert T.J."/>
            <person name="Weinstock G.M."/>
        </authorList>
    </citation>
    <scope>NUCLEOTIDE SEQUENCE [LARGE SCALE GENOMIC DNA]</scope>
    <source>
        <strain>SS14</strain>
    </source>
</reference>
<name>TIG_TREPS</name>
<evidence type="ECO:0000255" key="1">
    <source>
        <dbReference type="HAMAP-Rule" id="MF_00303"/>
    </source>
</evidence>